<evidence type="ECO:0000255" key="1">
    <source>
        <dbReference type="HAMAP-Rule" id="MF_00361"/>
    </source>
</evidence>
<comment type="function">
    <text evidence="1">Involved in the regulation of the intracellular balance of NAD and NADP, and is a key enzyme in the biosynthesis of NADP. Catalyzes specifically the phosphorylation on 2'-hydroxyl of the adenosine moiety of NAD to yield NADP.</text>
</comment>
<comment type="catalytic activity">
    <reaction evidence="1">
        <text>NAD(+) + ATP = ADP + NADP(+) + H(+)</text>
        <dbReference type="Rhea" id="RHEA:18629"/>
        <dbReference type="ChEBI" id="CHEBI:15378"/>
        <dbReference type="ChEBI" id="CHEBI:30616"/>
        <dbReference type="ChEBI" id="CHEBI:57540"/>
        <dbReference type="ChEBI" id="CHEBI:58349"/>
        <dbReference type="ChEBI" id="CHEBI:456216"/>
        <dbReference type="EC" id="2.7.1.23"/>
    </reaction>
</comment>
<comment type="cofactor">
    <cofactor evidence="1">
        <name>a divalent metal cation</name>
        <dbReference type="ChEBI" id="CHEBI:60240"/>
    </cofactor>
</comment>
<comment type="subcellular location">
    <subcellularLocation>
        <location evidence="1">Cytoplasm</location>
    </subcellularLocation>
</comment>
<comment type="similarity">
    <text evidence="1">Belongs to the NAD kinase family.</text>
</comment>
<proteinExistence type="inferred from homology"/>
<name>NADK_TREDE</name>
<keyword id="KW-0067">ATP-binding</keyword>
<keyword id="KW-0963">Cytoplasm</keyword>
<keyword id="KW-0418">Kinase</keyword>
<keyword id="KW-0520">NAD</keyword>
<keyword id="KW-0521">NADP</keyword>
<keyword id="KW-0547">Nucleotide-binding</keyword>
<keyword id="KW-1185">Reference proteome</keyword>
<keyword id="KW-0808">Transferase</keyword>
<dbReference type="EC" id="2.7.1.23" evidence="1"/>
<dbReference type="EMBL" id="AE017226">
    <property type="protein sequence ID" value="AAS12108.1"/>
    <property type="molecule type" value="Genomic_DNA"/>
</dbReference>
<dbReference type="RefSeq" id="NP_972197.1">
    <property type="nucleotide sequence ID" value="NC_002967.9"/>
</dbReference>
<dbReference type="RefSeq" id="WP_002679270.1">
    <property type="nucleotide sequence ID" value="NC_002967.9"/>
</dbReference>
<dbReference type="SMR" id="Q73MB8"/>
<dbReference type="STRING" id="243275.TDE_1591"/>
<dbReference type="PaxDb" id="243275-TDE_1591"/>
<dbReference type="GeneID" id="2739788"/>
<dbReference type="KEGG" id="tde:TDE_1591"/>
<dbReference type="PATRIC" id="fig|243275.7.peg.1521"/>
<dbReference type="eggNOG" id="COG0061">
    <property type="taxonomic scope" value="Bacteria"/>
</dbReference>
<dbReference type="HOGENOM" id="CLU_008831_0_0_12"/>
<dbReference type="OrthoDB" id="9774737at2"/>
<dbReference type="Proteomes" id="UP000008212">
    <property type="component" value="Chromosome"/>
</dbReference>
<dbReference type="GO" id="GO:0005737">
    <property type="term" value="C:cytoplasm"/>
    <property type="evidence" value="ECO:0007669"/>
    <property type="project" value="UniProtKB-SubCell"/>
</dbReference>
<dbReference type="GO" id="GO:0005524">
    <property type="term" value="F:ATP binding"/>
    <property type="evidence" value="ECO:0007669"/>
    <property type="project" value="UniProtKB-KW"/>
</dbReference>
<dbReference type="GO" id="GO:0046872">
    <property type="term" value="F:metal ion binding"/>
    <property type="evidence" value="ECO:0007669"/>
    <property type="project" value="UniProtKB-UniRule"/>
</dbReference>
<dbReference type="GO" id="GO:0051287">
    <property type="term" value="F:NAD binding"/>
    <property type="evidence" value="ECO:0007669"/>
    <property type="project" value="UniProtKB-ARBA"/>
</dbReference>
<dbReference type="GO" id="GO:0003951">
    <property type="term" value="F:NAD+ kinase activity"/>
    <property type="evidence" value="ECO:0007669"/>
    <property type="project" value="UniProtKB-UniRule"/>
</dbReference>
<dbReference type="GO" id="GO:0019674">
    <property type="term" value="P:NAD metabolic process"/>
    <property type="evidence" value="ECO:0007669"/>
    <property type="project" value="InterPro"/>
</dbReference>
<dbReference type="GO" id="GO:0006741">
    <property type="term" value="P:NADP biosynthetic process"/>
    <property type="evidence" value="ECO:0007669"/>
    <property type="project" value="UniProtKB-UniRule"/>
</dbReference>
<dbReference type="Gene3D" id="3.40.50.10330">
    <property type="entry name" value="Probable inorganic polyphosphate/atp-NAD kinase, domain 1"/>
    <property type="match status" value="1"/>
</dbReference>
<dbReference type="Gene3D" id="2.60.200.30">
    <property type="entry name" value="Probable inorganic polyphosphate/atp-NAD kinase, domain 2"/>
    <property type="match status" value="1"/>
</dbReference>
<dbReference type="HAMAP" id="MF_00361">
    <property type="entry name" value="NAD_kinase"/>
    <property type="match status" value="1"/>
</dbReference>
<dbReference type="InterPro" id="IPR017438">
    <property type="entry name" value="ATP-NAD_kinase_N"/>
</dbReference>
<dbReference type="InterPro" id="IPR017437">
    <property type="entry name" value="ATP-NAD_kinase_PpnK-typ_C"/>
</dbReference>
<dbReference type="InterPro" id="IPR016064">
    <property type="entry name" value="NAD/diacylglycerol_kinase_sf"/>
</dbReference>
<dbReference type="InterPro" id="IPR002504">
    <property type="entry name" value="NADK"/>
</dbReference>
<dbReference type="PANTHER" id="PTHR20275">
    <property type="entry name" value="NAD KINASE"/>
    <property type="match status" value="1"/>
</dbReference>
<dbReference type="PANTHER" id="PTHR20275:SF0">
    <property type="entry name" value="NAD KINASE"/>
    <property type="match status" value="1"/>
</dbReference>
<dbReference type="Pfam" id="PF01513">
    <property type="entry name" value="NAD_kinase"/>
    <property type="match status" value="1"/>
</dbReference>
<dbReference type="Pfam" id="PF20143">
    <property type="entry name" value="NAD_kinase_C"/>
    <property type="match status" value="1"/>
</dbReference>
<dbReference type="SUPFAM" id="SSF111331">
    <property type="entry name" value="NAD kinase/diacylglycerol kinase-like"/>
    <property type="match status" value="1"/>
</dbReference>
<feature type="chain" id="PRO_0000229709" description="NAD kinase">
    <location>
        <begin position="1"/>
        <end position="284"/>
    </location>
</feature>
<feature type="active site" description="Proton acceptor" evidence="1">
    <location>
        <position position="60"/>
    </location>
</feature>
<feature type="binding site" evidence="1">
    <location>
        <begin position="60"/>
        <end position="61"/>
    </location>
    <ligand>
        <name>NAD(+)</name>
        <dbReference type="ChEBI" id="CHEBI:57540"/>
    </ligand>
</feature>
<feature type="binding site" evidence="1">
    <location>
        <begin position="134"/>
        <end position="135"/>
    </location>
    <ligand>
        <name>NAD(+)</name>
        <dbReference type="ChEBI" id="CHEBI:57540"/>
    </ligand>
</feature>
<feature type="binding site" evidence="1">
    <location>
        <position position="145"/>
    </location>
    <ligand>
        <name>NAD(+)</name>
        <dbReference type="ChEBI" id="CHEBI:57540"/>
    </ligand>
</feature>
<feature type="binding site" evidence="1">
    <location>
        <position position="162"/>
    </location>
    <ligand>
        <name>NAD(+)</name>
        <dbReference type="ChEBI" id="CHEBI:57540"/>
    </ligand>
</feature>
<feature type="binding site" evidence="1">
    <location>
        <position position="164"/>
    </location>
    <ligand>
        <name>NAD(+)</name>
        <dbReference type="ChEBI" id="CHEBI:57540"/>
    </ligand>
</feature>
<feature type="binding site" evidence="1">
    <location>
        <position position="235"/>
    </location>
    <ligand>
        <name>NAD(+)</name>
        <dbReference type="ChEBI" id="CHEBI:57540"/>
    </ligand>
</feature>
<organism>
    <name type="scientific">Treponema denticola (strain ATCC 35405 / DSM 14222 / CIP 103919 / JCM 8153 / KCTC 15104)</name>
    <dbReference type="NCBI Taxonomy" id="243275"/>
    <lineage>
        <taxon>Bacteria</taxon>
        <taxon>Pseudomonadati</taxon>
        <taxon>Spirochaetota</taxon>
        <taxon>Spirochaetia</taxon>
        <taxon>Spirochaetales</taxon>
        <taxon>Treponemataceae</taxon>
        <taxon>Treponema</taxon>
    </lineage>
</organism>
<protein>
    <recommendedName>
        <fullName evidence="1">NAD kinase</fullName>
        <ecNumber evidence="1">2.7.1.23</ecNumber>
    </recommendedName>
    <alternativeName>
        <fullName evidence="1">ATP-dependent NAD kinase</fullName>
    </alternativeName>
</protein>
<accession>Q73MB8</accession>
<reference key="1">
    <citation type="journal article" date="2004" name="Proc. Natl. Acad. Sci. U.S.A.">
        <title>Comparison of the genome of the oral pathogen Treponema denticola with other spirochete genomes.</title>
        <authorList>
            <person name="Seshadri R."/>
            <person name="Myers G.S.A."/>
            <person name="Tettelin H."/>
            <person name="Eisen J.A."/>
            <person name="Heidelberg J.F."/>
            <person name="Dodson R.J."/>
            <person name="Davidsen T.M."/>
            <person name="DeBoy R.T."/>
            <person name="Fouts D.E."/>
            <person name="Haft D.H."/>
            <person name="Selengut J."/>
            <person name="Ren Q."/>
            <person name="Brinkac L.M."/>
            <person name="Madupu R."/>
            <person name="Kolonay J.F."/>
            <person name="Durkin S.A."/>
            <person name="Daugherty S.C."/>
            <person name="Shetty J."/>
            <person name="Shvartsbeyn A."/>
            <person name="Gebregeorgis E."/>
            <person name="Geer K."/>
            <person name="Tsegaye G."/>
            <person name="Malek J.A."/>
            <person name="Ayodeji B."/>
            <person name="Shatsman S."/>
            <person name="McLeod M.P."/>
            <person name="Smajs D."/>
            <person name="Howell J.K."/>
            <person name="Pal S."/>
            <person name="Amin A."/>
            <person name="Vashisth P."/>
            <person name="McNeill T.Z."/>
            <person name="Xiang Q."/>
            <person name="Sodergren E."/>
            <person name="Baca E."/>
            <person name="Weinstock G.M."/>
            <person name="Norris S.J."/>
            <person name="Fraser C.M."/>
            <person name="Paulsen I.T."/>
        </authorList>
    </citation>
    <scope>NUCLEOTIDE SEQUENCE [LARGE SCALE GENOMIC DNA]</scope>
    <source>
        <strain>ATCC 35405 / DSM 14222 / CIP 103919 / JCM 8153 / KCTC 15104</strain>
    </source>
</reference>
<gene>
    <name evidence="1" type="primary">nadK</name>
    <name type="ordered locus">TDE_1591</name>
</gene>
<sequence length="284" mass="30737">MKKVLIVLSIEKPNAKKICKEIEAFLSAKGIDSFVYKYDGISHSPELNEDYDLAISLGGDGTVLFTARYSAPRHIPVFPINLGRFGFIANIEPKEWEGELLHLLNGKQALHKRMLLSASINRKNKEIVKYEALNDAVVSGSGIAKLINLDISFNGISFGVFRADGVIVSTPTGSTAYSAASGGPILDPDVSAFVLTPISPFSLSNRPLVLPSSGQMKIKILPARAKDIIVSIDGQEMVSLQEDDEIIISESPNKVKMAGCSPDNFYKALRSKLGWSGSSSPKLN</sequence>